<feature type="chain" id="PRO_1000073527" description="tRNA N6-adenosine threonylcarbamoyltransferase">
    <location>
        <begin position="1"/>
        <end position="331"/>
    </location>
</feature>
<feature type="binding site" evidence="1">
    <location>
        <position position="109"/>
    </location>
    <ligand>
        <name>Fe cation</name>
        <dbReference type="ChEBI" id="CHEBI:24875"/>
    </ligand>
</feature>
<feature type="binding site" evidence="1">
    <location>
        <position position="113"/>
    </location>
    <ligand>
        <name>Fe cation</name>
        <dbReference type="ChEBI" id="CHEBI:24875"/>
    </ligand>
</feature>
<feature type="binding site" evidence="1">
    <location>
        <begin position="130"/>
        <end position="134"/>
    </location>
    <ligand>
        <name>substrate</name>
    </ligand>
</feature>
<feature type="binding site" evidence="1">
    <location>
        <position position="130"/>
    </location>
    <ligand>
        <name>Fe cation</name>
        <dbReference type="ChEBI" id="CHEBI:24875"/>
    </ligand>
</feature>
<feature type="binding site" evidence="1">
    <location>
        <position position="162"/>
    </location>
    <ligand>
        <name>substrate</name>
    </ligand>
</feature>
<feature type="binding site" evidence="1">
    <location>
        <position position="183"/>
    </location>
    <ligand>
        <name>substrate</name>
    </ligand>
</feature>
<feature type="binding site" evidence="1">
    <location>
        <position position="262"/>
    </location>
    <ligand>
        <name>substrate</name>
    </ligand>
</feature>
<feature type="binding site" evidence="1">
    <location>
        <position position="290"/>
    </location>
    <ligand>
        <name>Fe cation</name>
        <dbReference type="ChEBI" id="CHEBI:24875"/>
    </ligand>
</feature>
<proteinExistence type="inferred from homology"/>
<dbReference type="EC" id="2.3.1.234" evidence="1"/>
<dbReference type="EMBL" id="CP000682">
    <property type="protein sequence ID" value="ABP96362.1"/>
    <property type="molecule type" value="Genomic_DNA"/>
</dbReference>
<dbReference type="RefSeq" id="WP_012022149.1">
    <property type="nucleotide sequence ID" value="NC_009440.1"/>
</dbReference>
<dbReference type="SMR" id="A4YIW0"/>
<dbReference type="STRING" id="399549.Msed_2224"/>
<dbReference type="GeneID" id="91756769"/>
<dbReference type="KEGG" id="mse:Msed_2224"/>
<dbReference type="eggNOG" id="arCOG01183">
    <property type="taxonomic scope" value="Archaea"/>
</dbReference>
<dbReference type="HOGENOM" id="CLU_023208_2_2_2"/>
<dbReference type="Proteomes" id="UP000000242">
    <property type="component" value="Chromosome"/>
</dbReference>
<dbReference type="GO" id="GO:0005737">
    <property type="term" value="C:cytoplasm"/>
    <property type="evidence" value="ECO:0007669"/>
    <property type="project" value="UniProtKB-SubCell"/>
</dbReference>
<dbReference type="GO" id="GO:0000408">
    <property type="term" value="C:EKC/KEOPS complex"/>
    <property type="evidence" value="ECO:0007669"/>
    <property type="project" value="InterPro"/>
</dbReference>
<dbReference type="GO" id="GO:0005506">
    <property type="term" value="F:iron ion binding"/>
    <property type="evidence" value="ECO:0007669"/>
    <property type="project" value="UniProtKB-UniRule"/>
</dbReference>
<dbReference type="GO" id="GO:0061711">
    <property type="term" value="F:N(6)-L-threonylcarbamoyladenine synthase activity"/>
    <property type="evidence" value="ECO:0007669"/>
    <property type="project" value="UniProtKB-EC"/>
</dbReference>
<dbReference type="GO" id="GO:0002949">
    <property type="term" value="P:tRNA threonylcarbamoyladenosine modification"/>
    <property type="evidence" value="ECO:0007669"/>
    <property type="project" value="UniProtKB-UniRule"/>
</dbReference>
<dbReference type="FunFam" id="3.30.420.40:FF:000229">
    <property type="entry name" value="tRNA N6-adenosine threonylcarbamoyltransferase"/>
    <property type="match status" value="1"/>
</dbReference>
<dbReference type="Gene3D" id="3.30.420.40">
    <property type="match status" value="2"/>
</dbReference>
<dbReference type="HAMAP" id="MF_01446">
    <property type="entry name" value="Kae1"/>
    <property type="match status" value="1"/>
</dbReference>
<dbReference type="InterPro" id="IPR043129">
    <property type="entry name" value="ATPase_NBD"/>
</dbReference>
<dbReference type="InterPro" id="IPR000905">
    <property type="entry name" value="Gcp-like_dom"/>
</dbReference>
<dbReference type="InterPro" id="IPR017861">
    <property type="entry name" value="KAE1/TsaD"/>
</dbReference>
<dbReference type="InterPro" id="IPR034680">
    <property type="entry name" value="Kae1_archaea_euk"/>
</dbReference>
<dbReference type="NCBIfam" id="TIGR03722">
    <property type="entry name" value="arch_KAE1"/>
    <property type="match status" value="1"/>
</dbReference>
<dbReference type="NCBIfam" id="TIGR00329">
    <property type="entry name" value="gcp_kae1"/>
    <property type="match status" value="1"/>
</dbReference>
<dbReference type="PANTHER" id="PTHR11735">
    <property type="entry name" value="TRNA N6-ADENOSINE THREONYLCARBAMOYLTRANSFERASE"/>
    <property type="match status" value="1"/>
</dbReference>
<dbReference type="PANTHER" id="PTHR11735:SF14">
    <property type="entry name" value="TRNA N6-ADENOSINE THREONYLCARBAMOYLTRANSFERASE"/>
    <property type="match status" value="1"/>
</dbReference>
<dbReference type="Pfam" id="PF00814">
    <property type="entry name" value="TsaD"/>
    <property type="match status" value="1"/>
</dbReference>
<dbReference type="PRINTS" id="PR00789">
    <property type="entry name" value="OSIALOPTASE"/>
</dbReference>
<dbReference type="SUPFAM" id="SSF53067">
    <property type="entry name" value="Actin-like ATPase domain"/>
    <property type="match status" value="1"/>
</dbReference>
<protein>
    <recommendedName>
        <fullName evidence="1">tRNA N6-adenosine threonylcarbamoyltransferase</fullName>
        <ecNumber evidence="1">2.3.1.234</ecNumber>
    </recommendedName>
    <alternativeName>
        <fullName evidence="1">N6-L-threonylcarbamoyladenine synthase</fullName>
        <shortName evidence="1">t(6)A synthase</shortName>
    </alternativeName>
    <alternativeName>
        <fullName evidence="1">t(6)A37 threonylcarbamoyladenosine biosynthesis protein Kae1</fullName>
    </alternativeName>
    <alternativeName>
        <fullName evidence="1">tRNA threonylcarbamoyladenosine biosynthesis protein Kae1</fullName>
    </alternativeName>
</protein>
<gene>
    <name evidence="1" type="primary">kae1</name>
    <name type="ordered locus">Msed_2224</name>
</gene>
<reference key="1">
    <citation type="journal article" date="2008" name="Appl. Environ. Microbiol.">
        <title>The genome sequence of the metal-mobilizing, extremely thermoacidophilic archaeon Metallosphaera sedula provides insights into bioleaching-associated metabolism.</title>
        <authorList>
            <person name="Auernik K.S."/>
            <person name="Maezato Y."/>
            <person name="Blum P.H."/>
            <person name="Kelly R.M."/>
        </authorList>
    </citation>
    <scope>NUCLEOTIDE SEQUENCE [LARGE SCALE GENOMIC DNA]</scope>
    <source>
        <strain>ATCC 51363 / DSM 5348 / JCM 9185 / NBRC 15509 / TH2</strain>
    </source>
</reference>
<evidence type="ECO:0000255" key="1">
    <source>
        <dbReference type="HAMAP-Rule" id="MF_01446"/>
    </source>
</evidence>
<keyword id="KW-0012">Acyltransferase</keyword>
<keyword id="KW-0963">Cytoplasm</keyword>
<keyword id="KW-0408">Iron</keyword>
<keyword id="KW-0479">Metal-binding</keyword>
<keyword id="KW-1185">Reference proteome</keyword>
<keyword id="KW-0808">Transferase</keyword>
<keyword id="KW-0819">tRNA processing</keyword>
<organism>
    <name type="scientific">Metallosphaera sedula (strain ATCC 51363 / DSM 5348 / JCM 9185 / NBRC 15509 / TH2)</name>
    <dbReference type="NCBI Taxonomy" id="399549"/>
    <lineage>
        <taxon>Archaea</taxon>
        <taxon>Thermoproteota</taxon>
        <taxon>Thermoprotei</taxon>
        <taxon>Sulfolobales</taxon>
        <taxon>Sulfolobaceae</taxon>
        <taxon>Metallosphaera</taxon>
    </lineage>
</organism>
<accession>A4YIW0</accession>
<comment type="function">
    <text evidence="1">Required for the formation of a threonylcarbamoyl group on adenosine at position 37 (t(6)A37) in tRNAs that read codons beginning with adenine. Is probably involved in the transfer of the threonylcarbamoyl moiety of threonylcarbamoyl-AMP (TC-AMP) to the N6 group of A37.</text>
</comment>
<comment type="catalytic activity">
    <reaction evidence="1">
        <text>L-threonylcarbamoyladenylate + adenosine(37) in tRNA = N(6)-L-threonylcarbamoyladenosine(37) in tRNA + AMP + H(+)</text>
        <dbReference type="Rhea" id="RHEA:37059"/>
        <dbReference type="Rhea" id="RHEA-COMP:10162"/>
        <dbReference type="Rhea" id="RHEA-COMP:10163"/>
        <dbReference type="ChEBI" id="CHEBI:15378"/>
        <dbReference type="ChEBI" id="CHEBI:73682"/>
        <dbReference type="ChEBI" id="CHEBI:74411"/>
        <dbReference type="ChEBI" id="CHEBI:74418"/>
        <dbReference type="ChEBI" id="CHEBI:456215"/>
        <dbReference type="EC" id="2.3.1.234"/>
    </reaction>
</comment>
<comment type="cofactor">
    <cofactor evidence="1">
        <name>Fe(2+)</name>
        <dbReference type="ChEBI" id="CHEBI:29033"/>
    </cofactor>
    <text evidence="1">Binds 1 Fe(2+) ion per subunit.</text>
</comment>
<comment type="subcellular location">
    <subcellularLocation>
        <location evidence="1">Cytoplasm</location>
    </subcellularLocation>
</comment>
<comment type="similarity">
    <text evidence="1">Belongs to the KAE1 / TsaD family.</text>
</comment>
<name>KAE1_METS5</name>
<sequence>MIVLGIESTAHTFGVGVAQDQVPFILANERHTFVPQTGGMKPSEAARHHTLVAHEILRGALDRARISIRDVDGIAVALGPGMGPTLRVGAVVARALSLRFNKKLVPVNHGIGHIEIGYLTTEAKDPLILYLSGGNTIITTYYRRRFRIFGETLDIALGNMMDTFVREVGLAPPYIVDGKHKIDICAEQGSSIIDLPYTVKGEDMSFSGLLTAALRAVKKHNLHDVCLSLREIAYGMLLEATERALALTEKGEIMIVGGVAASGSLRSKLEKLSNDWGVGLKVVPTSFAGDNGAMIAYAGLLALKHGVHIDVKDSTIRPRWRIDEVDIPWRD</sequence>